<evidence type="ECO:0000255" key="1">
    <source>
        <dbReference type="HAMAP-Rule" id="MF_01302"/>
    </source>
</evidence>
<evidence type="ECO:0000305" key="2"/>
<feature type="chain" id="PRO_1000140498" description="Small ribosomal subunit protein uS8">
    <location>
        <begin position="1"/>
        <end position="131"/>
    </location>
</feature>
<proteinExistence type="inferred from homology"/>
<comment type="function">
    <text evidence="1">One of the primary rRNA binding proteins, it binds directly to 16S rRNA central domain where it helps coordinate assembly of the platform of the 30S subunit.</text>
</comment>
<comment type="subunit">
    <text evidence="1">Part of the 30S ribosomal subunit. Contacts proteins S5 and S12.</text>
</comment>
<comment type="similarity">
    <text evidence="1">Belongs to the universal ribosomal protein uS8 family.</text>
</comment>
<keyword id="KW-0687">Ribonucleoprotein</keyword>
<keyword id="KW-0689">Ribosomal protein</keyword>
<keyword id="KW-0694">RNA-binding</keyword>
<keyword id="KW-0699">rRNA-binding</keyword>
<reference key="1">
    <citation type="journal article" date="2008" name="PLoS ONE">
        <title>Comparative analysis of Acinetobacters: three genomes for three lifestyles.</title>
        <authorList>
            <person name="Vallenet D."/>
            <person name="Nordmann P."/>
            <person name="Barbe V."/>
            <person name="Poirel L."/>
            <person name="Mangenot S."/>
            <person name="Bataille E."/>
            <person name="Dossat C."/>
            <person name="Gas S."/>
            <person name="Kreimeyer A."/>
            <person name="Lenoble P."/>
            <person name="Oztas S."/>
            <person name="Poulain J."/>
            <person name="Segurens B."/>
            <person name="Robert C."/>
            <person name="Abergel C."/>
            <person name="Claverie J.-M."/>
            <person name="Raoult D."/>
            <person name="Medigue C."/>
            <person name="Weissenbach J."/>
            <person name="Cruveiller S."/>
        </authorList>
    </citation>
    <scope>NUCLEOTIDE SEQUENCE [LARGE SCALE GENOMIC DNA]</scope>
    <source>
        <strain>AYE</strain>
    </source>
</reference>
<sequence>MSMQDTVADMLTRVRNAQMAKKQTVSMPSSKLKVAIANVLQQEGYISNVEVAQEETKSTLTITLKYFEGKPVIEMVKRVSRPGLRQYRGKDKLPSVKQGLGIAIVSTSKGIMTDRAARAAGIGGEVIAFVS</sequence>
<accession>B0V6V9</accession>
<protein>
    <recommendedName>
        <fullName evidence="1">Small ribosomal subunit protein uS8</fullName>
    </recommendedName>
    <alternativeName>
        <fullName evidence="2">30S ribosomal protein S8</fullName>
    </alternativeName>
</protein>
<gene>
    <name evidence="1" type="primary">rpsH</name>
    <name type="ordered locus">ABAYE0422</name>
</gene>
<dbReference type="EMBL" id="CU459141">
    <property type="protein sequence ID" value="CAM85396.1"/>
    <property type="molecule type" value="Genomic_DNA"/>
</dbReference>
<dbReference type="RefSeq" id="WP_000062616.1">
    <property type="nucleotide sequence ID" value="NZ_JBDGFB010000011.1"/>
</dbReference>
<dbReference type="SMR" id="B0V6V9"/>
<dbReference type="EnsemblBacteria" id="CAM85396">
    <property type="protein sequence ID" value="CAM85396"/>
    <property type="gene ID" value="ABAYE0422"/>
</dbReference>
<dbReference type="GeneID" id="92895303"/>
<dbReference type="KEGG" id="aby:ABAYE0422"/>
<dbReference type="HOGENOM" id="CLU_098428_0_0_6"/>
<dbReference type="GO" id="GO:1990904">
    <property type="term" value="C:ribonucleoprotein complex"/>
    <property type="evidence" value="ECO:0007669"/>
    <property type="project" value="UniProtKB-KW"/>
</dbReference>
<dbReference type="GO" id="GO:0005840">
    <property type="term" value="C:ribosome"/>
    <property type="evidence" value="ECO:0007669"/>
    <property type="project" value="UniProtKB-KW"/>
</dbReference>
<dbReference type="GO" id="GO:0019843">
    <property type="term" value="F:rRNA binding"/>
    <property type="evidence" value="ECO:0007669"/>
    <property type="project" value="UniProtKB-UniRule"/>
</dbReference>
<dbReference type="GO" id="GO:0003735">
    <property type="term" value="F:structural constituent of ribosome"/>
    <property type="evidence" value="ECO:0007669"/>
    <property type="project" value="InterPro"/>
</dbReference>
<dbReference type="GO" id="GO:0006412">
    <property type="term" value="P:translation"/>
    <property type="evidence" value="ECO:0007669"/>
    <property type="project" value="UniProtKB-UniRule"/>
</dbReference>
<dbReference type="FunFam" id="3.30.1370.30:FF:000002">
    <property type="entry name" value="30S ribosomal protein S8"/>
    <property type="match status" value="1"/>
</dbReference>
<dbReference type="FunFam" id="3.30.1490.10:FF:000001">
    <property type="entry name" value="30S ribosomal protein S8"/>
    <property type="match status" value="1"/>
</dbReference>
<dbReference type="Gene3D" id="3.30.1370.30">
    <property type="match status" value="1"/>
</dbReference>
<dbReference type="Gene3D" id="3.30.1490.10">
    <property type="match status" value="1"/>
</dbReference>
<dbReference type="HAMAP" id="MF_01302_B">
    <property type="entry name" value="Ribosomal_uS8_B"/>
    <property type="match status" value="1"/>
</dbReference>
<dbReference type="InterPro" id="IPR000630">
    <property type="entry name" value="Ribosomal_uS8"/>
</dbReference>
<dbReference type="InterPro" id="IPR047863">
    <property type="entry name" value="Ribosomal_uS8_CS"/>
</dbReference>
<dbReference type="InterPro" id="IPR035987">
    <property type="entry name" value="Ribosomal_uS8_sf"/>
</dbReference>
<dbReference type="NCBIfam" id="NF001109">
    <property type="entry name" value="PRK00136.1"/>
    <property type="match status" value="1"/>
</dbReference>
<dbReference type="PANTHER" id="PTHR11758">
    <property type="entry name" value="40S RIBOSOMAL PROTEIN S15A"/>
    <property type="match status" value="1"/>
</dbReference>
<dbReference type="Pfam" id="PF00410">
    <property type="entry name" value="Ribosomal_S8"/>
    <property type="match status" value="1"/>
</dbReference>
<dbReference type="SUPFAM" id="SSF56047">
    <property type="entry name" value="Ribosomal protein S8"/>
    <property type="match status" value="1"/>
</dbReference>
<dbReference type="PROSITE" id="PS00053">
    <property type="entry name" value="RIBOSOMAL_S8"/>
    <property type="match status" value="1"/>
</dbReference>
<organism>
    <name type="scientific">Acinetobacter baumannii (strain AYE)</name>
    <dbReference type="NCBI Taxonomy" id="509173"/>
    <lineage>
        <taxon>Bacteria</taxon>
        <taxon>Pseudomonadati</taxon>
        <taxon>Pseudomonadota</taxon>
        <taxon>Gammaproteobacteria</taxon>
        <taxon>Moraxellales</taxon>
        <taxon>Moraxellaceae</taxon>
        <taxon>Acinetobacter</taxon>
        <taxon>Acinetobacter calcoaceticus/baumannii complex</taxon>
    </lineage>
</organism>
<name>RS8_ACIBY</name>